<comment type="function">
    <text evidence="1">Produces ATP from ADP in the presence of a proton gradient across the membrane. The gamma chain is believed to be important in regulating ATPase activity and the flow of protons through the CF(0) complex.</text>
</comment>
<comment type="subunit">
    <text evidence="1">F-type ATPases have 2 components, CF(1) - the catalytic core - and CF(0) - the membrane proton channel. CF(1) has five subunits: alpha(3), beta(3), gamma(1), delta(1), epsilon(1). CF(0) has three main subunits: a, b and c.</text>
</comment>
<comment type="subcellular location">
    <subcellularLocation>
        <location evidence="1">Cell inner membrane</location>
        <topology evidence="1">Peripheral membrane protein</topology>
    </subcellularLocation>
</comment>
<comment type="similarity">
    <text evidence="1">Belongs to the ATPase gamma chain family.</text>
</comment>
<protein>
    <recommendedName>
        <fullName evidence="1">ATP synthase gamma chain</fullName>
    </recommendedName>
    <alternativeName>
        <fullName evidence="1">ATP synthase F1 sector gamma subunit</fullName>
    </alternativeName>
    <alternativeName>
        <fullName evidence="1">F-ATPase gamma subunit</fullName>
    </alternativeName>
</protein>
<gene>
    <name evidence="1" type="primary">atpG</name>
    <name type="ordered locus">Glov_3171</name>
</gene>
<accession>B3EA02</accession>
<evidence type="ECO:0000255" key="1">
    <source>
        <dbReference type="HAMAP-Rule" id="MF_00815"/>
    </source>
</evidence>
<reference key="1">
    <citation type="submission" date="2008-05" db="EMBL/GenBank/DDBJ databases">
        <title>Complete sequence of chromosome of Geobacter lovleyi SZ.</title>
        <authorList>
            <consortium name="US DOE Joint Genome Institute"/>
            <person name="Lucas S."/>
            <person name="Copeland A."/>
            <person name="Lapidus A."/>
            <person name="Glavina del Rio T."/>
            <person name="Dalin E."/>
            <person name="Tice H."/>
            <person name="Bruce D."/>
            <person name="Goodwin L."/>
            <person name="Pitluck S."/>
            <person name="Chertkov O."/>
            <person name="Meincke L."/>
            <person name="Brettin T."/>
            <person name="Detter J.C."/>
            <person name="Han C."/>
            <person name="Tapia R."/>
            <person name="Kuske C.R."/>
            <person name="Schmutz J."/>
            <person name="Larimer F."/>
            <person name="Land M."/>
            <person name="Hauser L."/>
            <person name="Kyrpides N."/>
            <person name="Mikhailova N."/>
            <person name="Sung Y."/>
            <person name="Fletcher K.E."/>
            <person name="Ritalahti K.M."/>
            <person name="Loeffler F.E."/>
            <person name="Richardson P."/>
        </authorList>
    </citation>
    <scope>NUCLEOTIDE SEQUENCE [LARGE SCALE GENOMIC DNA]</scope>
    <source>
        <strain>ATCC BAA-1151 / DSM 17278 / SZ</strain>
    </source>
</reference>
<sequence length="288" mass="32124">MASLKSIKKRIVSVKNTRQITKAMKMVSAAKLRRAQENVVAARPYAQKMGEVLQSLAGNLEGNLHPLLEKRDAKKLLLIVVTSDRGLCGGFNTNLCKAGERYIKEKQAEFDQISIMTVGRKGYEFLKSRHTVYKNFANMLSKPNYQAAAMLAQDVIEGYLAEEYDQVVMLFNSFRTVMSQDITFQQLLPIEPEEKIAADENGVEYIYEPSVSDLLTEILPKNIEVQIFKAMLESVAGEHGARMTAMDSASKNASEMIGKLTLQYNRARQAAITTELMEIISGAESIKG</sequence>
<feature type="chain" id="PRO_1000134157" description="ATP synthase gamma chain">
    <location>
        <begin position="1"/>
        <end position="288"/>
    </location>
</feature>
<keyword id="KW-0066">ATP synthesis</keyword>
<keyword id="KW-0997">Cell inner membrane</keyword>
<keyword id="KW-1003">Cell membrane</keyword>
<keyword id="KW-0139">CF(1)</keyword>
<keyword id="KW-0375">Hydrogen ion transport</keyword>
<keyword id="KW-0406">Ion transport</keyword>
<keyword id="KW-0472">Membrane</keyword>
<keyword id="KW-1185">Reference proteome</keyword>
<keyword id="KW-0813">Transport</keyword>
<proteinExistence type="inferred from homology"/>
<name>ATPG_TRIL1</name>
<dbReference type="EMBL" id="CP001089">
    <property type="protein sequence ID" value="ACD96877.1"/>
    <property type="molecule type" value="Genomic_DNA"/>
</dbReference>
<dbReference type="RefSeq" id="WP_012471201.1">
    <property type="nucleotide sequence ID" value="NC_010814.1"/>
</dbReference>
<dbReference type="SMR" id="B3EA02"/>
<dbReference type="STRING" id="398767.Glov_3171"/>
<dbReference type="KEGG" id="glo:Glov_3171"/>
<dbReference type="eggNOG" id="COG0224">
    <property type="taxonomic scope" value="Bacteria"/>
</dbReference>
<dbReference type="HOGENOM" id="CLU_050669_0_1_7"/>
<dbReference type="OrthoDB" id="9812769at2"/>
<dbReference type="Proteomes" id="UP000002420">
    <property type="component" value="Chromosome"/>
</dbReference>
<dbReference type="GO" id="GO:0005886">
    <property type="term" value="C:plasma membrane"/>
    <property type="evidence" value="ECO:0007669"/>
    <property type="project" value="UniProtKB-SubCell"/>
</dbReference>
<dbReference type="GO" id="GO:0045259">
    <property type="term" value="C:proton-transporting ATP synthase complex"/>
    <property type="evidence" value="ECO:0007669"/>
    <property type="project" value="UniProtKB-KW"/>
</dbReference>
<dbReference type="GO" id="GO:0005524">
    <property type="term" value="F:ATP binding"/>
    <property type="evidence" value="ECO:0007669"/>
    <property type="project" value="UniProtKB-UniRule"/>
</dbReference>
<dbReference type="GO" id="GO:0046933">
    <property type="term" value="F:proton-transporting ATP synthase activity, rotational mechanism"/>
    <property type="evidence" value="ECO:0007669"/>
    <property type="project" value="UniProtKB-UniRule"/>
</dbReference>
<dbReference type="GO" id="GO:0042777">
    <property type="term" value="P:proton motive force-driven plasma membrane ATP synthesis"/>
    <property type="evidence" value="ECO:0007669"/>
    <property type="project" value="UniProtKB-UniRule"/>
</dbReference>
<dbReference type="CDD" id="cd12151">
    <property type="entry name" value="F1-ATPase_gamma"/>
    <property type="match status" value="1"/>
</dbReference>
<dbReference type="FunFam" id="1.10.287.80:FF:000001">
    <property type="entry name" value="ATP synthase gamma chain"/>
    <property type="match status" value="1"/>
</dbReference>
<dbReference type="FunFam" id="1.10.287.80:FF:000003">
    <property type="entry name" value="ATP synthase gamma chain, chloroplastic"/>
    <property type="match status" value="1"/>
</dbReference>
<dbReference type="Gene3D" id="3.40.1380.10">
    <property type="match status" value="1"/>
</dbReference>
<dbReference type="Gene3D" id="1.10.287.80">
    <property type="entry name" value="ATP synthase, gamma subunit, helix hairpin domain"/>
    <property type="match status" value="1"/>
</dbReference>
<dbReference type="HAMAP" id="MF_00815">
    <property type="entry name" value="ATP_synth_gamma_bact"/>
    <property type="match status" value="1"/>
</dbReference>
<dbReference type="InterPro" id="IPR035968">
    <property type="entry name" value="ATP_synth_F1_ATPase_gsu"/>
</dbReference>
<dbReference type="InterPro" id="IPR000131">
    <property type="entry name" value="ATP_synth_F1_gsu"/>
</dbReference>
<dbReference type="InterPro" id="IPR023632">
    <property type="entry name" value="ATP_synth_F1_gsu_CS"/>
</dbReference>
<dbReference type="NCBIfam" id="TIGR01146">
    <property type="entry name" value="ATPsyn_F1gamma"/>
    <property type="match status" value="1"/>
</dbReference>
<dbReference type="PANTHER" id="PTHR11693">
    <property type="entry name" value="ATP SYNTHASE GAMMA CHAIN"/>
    <property type="match status" value="1"/>
</dbReference>
<dbReference type="PANTHER" id="PTHR11693:SF22">
    <property type="entry name" value="ATP SYNTHASE SUBUNIT GAMMA, MITOCHONDRIAL"/>
    <property type="match status" value="1"/>
</dbReference>
<dbReference type="Pfam" id="PF00231">
    <property type="entry name" value="ATP-synt"/>
    <property type="match status" value="1"/>
</dbReference>
<dbReference type="PIRSF" id="PIRSF039089">
    <property type="entry name" value="ATP_synthase_gamma"/>
    <property type="match status" value="1"/>
</dbReference>
<dbReference type="PRINTS" id="PR00126">
    <property type="entry name" value="ATPASEGAMMA"/>
</dbReference>
<dbReference type="SUPFAM" id="SSF52943">
    <property type="entry name" value="ATP synthase (F1-ATPase), gamma subunit"/>
    <property type="match status" value="1"/>
</dbReference>
<dbReference type="PROSITE" id="PS00153">
    <property type="entry name" value="ATPASE_GAMMA"/>
    <property type="match status" value="1"/>
</dbReference>
<organism>
    <name type="scientific">Trichlorobacter lovleyi (strain ATCC BAA-1151 / DSM 17278 / SZ)</name>
    <name type="common">Geobacter lovleyi</name>
    <dbReference type="NCBI Taxonomy" id="398767"/>
    <lineage>
        <taxon>Bacteria</taxon>
        <taxon>Pseudomonadati</taxon>
        <taxon>Thermodesulfobacteriota</taxon>
        <taxon>Desulfuromonadia</taxon>
        <taxon>Geobacterales</taxon>
        <taxon>Geobacteraceae</taxon>
        <taxon>Trichlorobacter</taxon>
    </lineage>
</organism>